<accession>Q9UZJ5</accession>
<accession>G8ZKC5</accession>
<protein>
    <recommendedName>
        <fullName evidence="1">Large ribosomal subunit protein eL14</fullName>
    </recommendedName>
    <alternativeName>
        <fullName evidence="2">50S ribosomal protein L14e</fullName>
    </alternativeName>
</protein>
<organism>
    <name type="scientific">Pyrococcus abyssi (strain GE5 / Orsay)</name>
    <dbReference type="NCBI Taxonomy" id="272844"/>
    <lineage>
        <taxon>Archaea</taxon>
        <taxon>Methanobacteriati</taxon>
        <taxon>Methanobacteriota</taxon>
        <taxon>Thermococci</taxon>
        <taxon>Thermococcales</taxon>
        <taxon>Thermococcaceae</taxon>
        <taxon>Pyrococcus</taxon>
    </lineage>
</organism>
<dbReference type="EMBL" id="AJ248286">
    <property type="protein sequence ID" value="CAB50062.1"/>
    <property type="molecule type" value="Genomic_DNA"/>
</dbReference>
<dbReference type="EMBL" id="HE613800">
    <property type="protein sequence ID" value="CCE70568.1"/>
    <property type="molecule type" value="Genomic_DNA"/>
</dbReference>
<dbReference type="PIR" id="A75095">
    <property type="entry name" value="A75095"/>
</dbReference>
<dbReference type="RefSeq" id="WP_010868268.1">
    <property type="nucleotide sequence ID" value="NC_000868.1"/>
</dbReference>
<dbReference type="SMR" id="Q9UZJ5"/>
<dbReference type="STRING" id="272844.PAB7290"/>
<dbReference type="KEGG" id="pab:PAB7290"/>
<dbReference type="PATRIC" id="fig|272844.11.peg.1209"/>
<dbReference type="eggNOG" id="arCOG04167">
    <property type="taxonomic scope" value="Archaea"/>
</dbReference>
<dbReference type="HOGENOM" id="CLU_183474_0_0_2"/>
<dbReference type="OrthoDB" id="63594at2157"/>
<dbReference type="PhylomeDB" id="Q9UZJ5"/>
<dbReference type="Proteomes" id="UP000000810">
    <property type="component" value="Chromosome"/>
</dbReference>
<dbReference type="Proteomes" id="UP000009139">
    <property type="component" value="Chromosome"/>
</dbReference>
<dbReference type="GO" id="GO:0022625">
    <property type="term" value="C:cytosolic large ribosomal subunit"/>
    <property type="evidence" value="ECO:0007669"/>
    <property type="project" value="TreeGrafter"/>
</dbReference>
<dbReference type="GO" id="GO:0003723">
    <property type="term" value="F:RNA binding"/>
    <property type="evidence" value="ECO:0007669"/>
    <property type="project" value="InterPro"/>
</dbReference>
<dbReference type="GO" id="GO:0003735">
    <property type="term" value="F:structural constituent of ribosome"/>
    <property type="evidence" value="ECO:0007669"/>
    <property type="project" value="InterPro"/>
</dbReference>
<dbReference type="GO" id="GO:0042273">
    <property type="term" value="P:ribosomal large subunit biogenesis"/>
    <property type="evidence" value="ECO:0007669"/>
    <property type="project" value="TreeGrafter"/>
</dbReference>
<dbReference type="GO" id="GO:0006412">
    <property type="term" value="P:translation"/>
    <property type="evidence" value="ECO:0007669"/>
    <property type="project" value="UniProtKB-UniRule"/>
</dbReference>
<dbReference type="CDD" id="cd06088">
    <property type="entry name" value="KOW_RPL14"/>
    <property type="match status" value="1"/>
</dbReference>
<dbReference type="FunFam" id="2.30.30.30:FF:000045">
    <property type="entry name" value="50S ribosomal protein L14e"/>
    <property type="match status" value="1"/>
</dbReference>
<dbReference type="Gene3D" id="2.30.30.30">
    <property type="match status" value="1"/>
</dbReference>
<dbReference type="HAMAP" id="MF_00721">
    <property type="entry name" value="Ribosomal_eL14"/>
    <property type="match status" value="1"/>
</dbReference>
<dbReference type="InterPro" id="IPR005824">
    <property type="entry name" value="KOW"/>
</dbReference>
<dbReference type="InterPro" id="IPR014722">
    <property type="entry name" value="Rib_uL2_dom2"/>
</dbReference>
<dbReference type="InterPro" id="IPR039660">
    <property type="entry name" value="Ribosomal_eL14"/>
</dbReference>
<dbReference type="InterPro" id="IPR023651">
    <property type="entry name" value="Ribosomal_eL14_arc"/>
</dbReference>
<dbReference type="InterPro" id="IPR041985">
    <property type="entry name" value="Ribosomal_eL14_KOW"/>
</dbReference>
<dbReference type="InterPro" id="IPR008991">
    <property type="entry name" value="Translation_prot_SH3-like_sf"/>
</dbReference>
<dbReference type="NCBIfam" id="NF003320">
    <property type="entry name" value="PRK04333.1"/>
    <property type="match status" value="1"/>
</dbReference>
<dbReference type="PANTHER" id="PTHR11127">
    <property type="entry name" value="60S RIBOSOMAL PROTEIN L14"/>
    <property type="match status" value="1"/>
</dbReference>
<dbReference type="PANTHER" id="PTHR11127:SF2">
    <property type="entry name" value="LARGE RIBOSOMAL SUBUNIT PROTEIN EL14"/>
    <property type="match status" value="1"/>
</dbReference>
<dbReference type="Pfam" id="PF00467">
    <property type="entry name" value="KOW"/>
    <property type="match status" value="1"/>
</dbReference>
<dbReference type="SUPFAM" id="SSF50104">
    <property type="entry name" value="Translation proteins SH3-like domain"/>
    <property type="match status" value="1"/>
</dbReference>
<keyword id="KW-0687">Ribonucleoprotein</keyword>
<keyword id="KW-0689">Ribosomal protein</keyword>
<sequence length="82" mass="8898">MPAIDVGRIAVIIAGRRAGQKCVIVDIIDKNFVLVTGAGLNKVKRRRMNIKHLEPLPEKIDIPRGASDEEVKAALEKAGISL</sequence>
<reference key="1">
    <citation type="journal article" date="2003" name="Mol. Microbiol.">
        <title>An integrated analysis of the genome of the hyperthermophilic archaeon Pyrococcus abyssi.</title>
        <authorList>
            <person name="Cohen G.N."/>
            <person name="Barbe V."/>
            <person name="Flament D."/>
            <person name="Galperin M."/>
            <person name="Heilig R."/>
            <person name="Lecompte O."/>
            <person name="Poch O."/>
            <person name="Prieur D."/>
            <person name="Querellou J."/>
            <person name="Ripp R."/>
            <person name="Thierry J.-C."/>
            <person name="Van der Oost J."/>
            <person name="Weissenbach J."/>
            <person name="Zivanovic Y."/>
            <person name="Forterre P."/>
        </authorList>
    </citation>
    <scope>NUCLEOTIDE SEQUENCE [LARGE SCALE GENOMIC DNA]</scope>
    <source>
        <strain>GE5 / Orsay</strain>
    </source>
</reference>
<reference key="2">
    <citation type="journal article" date="2012" name="Curr. Microbiol.">
        <title>Re-annotation of two hyperthermophilic archaea Pyrococcus abyssi GE5 and Pyrococcus furiosus DSM 3638.</title>
        <authorList>
            <person name="Gao J."/>
            <person name="Wang J."/>
        </authorList>
    </citation>
    <scope>GENOME REANNOTATION</scope>
    <source>
        <strain>GE5 / Orsay</strain>
    </source>
</reference>
<proteinExistence type="inferred from homology"/>
<name>RL14E_PYRAB</name>
<evidence type="ECO:0000255" key="1">
    <source>
        <dbReference type="HAMAP-Rule" id="MF_00721"/>
    </source>
</evidence>
<evidence type="ECO:0000305" key="2"/>
<feature type="chain" id="PRO_0000132050" description="Large ribosomal subunit protein eL14">
    <location>
        <begin position="1"/>
        <end position="82"/>
    </location>
</feature>
<gene>
    <name evidence="1" type="primary">rpl14e</name>
    <name type="ordered locus">PYRAB11510</name>
    <name type="ORF">PAB7290</name>
</gene>
<comment type="similarity">
    <text evidence="1">Belongs to the eukaryotic ribosomal protein eL14 family.</text>
</comment>